<keyword id="KW-0067">ATP-binding</keyword>
<keyword id="KW-0418">Kinase</keyword>
<keyword id="KW-0547">Nucleotide-binding</keyword>
<keyword id="KW-1185">Reference proteome</keyword>
<keyword id="KW-0677">Repeat</keyword>
<keyword id="KW-0808">Transferase</keyword>
<reference key="1">
    <citation type="submission" date="1998-07" db="EMBL/GenBank/DDBJ databases">
        <title>Molecular aspects of AtP5K2 in stomatal guard cells a phosphatidyinositol-4-phosphate 5-kinase.</title>
        <authorList>
            <person name="Elge S."/>
            <person name="Mueller-Roeber B."/>
        </authorList>
    </citation>
    <scope>NUCLEOTIDE SEQUENCE [MRNA]</scope>
    <source>
        <strain>cv. Columbia</strain>
        <tissue>Seedling hypocotyl</tissue>
    </source>
</reference>
<reference key="2">
    <citation type="journal article" date="2000" name="Nature">
        <title>Sequence and analysis of chromosome 1 of the plant Arabidopsis thaliana.</title>
        <authorList>
            <person name="Theologis A."/>
            <person name="Ecker J.R."/>
            <person name="Palm C.J."/>
            <person name="Federspiel N.A."/>
            <person name="Kaul S."/>
            <person name="White O."/>
            <person name="Alonso J."/>
            <person name="Altafi H."/>
            <person name="Araujo R."/>
            <person name="Bowman C.L."/>
            <person name="Brooks S.Y."/>
            <person name="Buehler E."/>
            <person name="Chan A."/>
            <person name="Chao Q."/>
            <person name="Chen H."/>
            <person name="Cheuk R.F."/>
            <person name="Chin C.W."/>
            <person name="Chung M.K."/>
            <person name="Conn L."/>
            <person name="Conway A.B."/>
            <person name="Conway A.R."/>
            <person name="Creasy T.H."/>
            <person name="Dewar K."/>
            <person name="Dunn P."/>
            <person name="Etgu P."/>
            <person name="Feldblyum T.V."/>
            <person name="Feng J.-D."/>
            <person name="Fong B."/>
            <person name="Fujii C.Y."/>
            <person name="Gill J.E."/>
            <person name="Goldsmith A.D."/>
            <person name="Haas B."/>
            <person name="Hansen N.F."/>
            <person name="Hughes B."/>
            <person name="Huizar L."/>
            <person name="Hunter J.L."/>
            <person name="Jenkins J."/>
            <person name="Johnson-Hopson C."/>
            <person name="Khan S."/>
            <person name="Khaykin E."/>
            <person name="Kim C.J."/>
            <person name="Koo H.L."/>
            <person name="Kremenetskaia I."/>
            <person name="Kurtz D.B."/>
            <person name="Kwan A."/>
            <person name="Lam B."/>
            <person name="Langin-Hooper S."/>
            <person name="Lee A."/>
            <person name="Lee J.M."/>
            <person name="Lenz C.A."/>
            <person name="Li J.H."/>
            <person name="Li Y.-P."/>
            <person name="Lin X."/>
            <person name="Liu S.X."/>
            <person name="Liu Z.A."/>
            <person name="Luros J.S."/>
            <person name="Maiti R."/>
            <person name="Marziali A."/>
            <person name="Militscher J."/>
            <person name="Miranda M."/>
            <person name="Nguyen M."/>
            <person name="Nierman W.C."/>
            <person name="Osborne B.I."/>
            <person name="Pai G."/>
            <person name="Peterson J."/>
            <person name="Pham P.K."/>
            <person name="Rizzo M."/>
            <person name="Rooney T."/>
            <person name="Rowley D."/>
            <person name="Sakano H."/>
            <person name="Salzberg S.L."/>
            <person name="Schwartz J.R."/>
            <person name="Shinn P."/>
            <person name="Southwick A.M."/>
            <person name="Sun H."/>
            <person name="Tallon L.J."/>
            <person name="Tambunga G."/>
            <person name="Toriumi M.J."/>
            <person name="Town C.D."/>
            <person name="Utterback T."/>
            <person name="Van Aken S."/>
            <person name="Vaysberg M."/>
            <person name="Vysotskaia V.S."/>
            <person name="Walker M."/>
            <person name="Wu D."/>
            <person name="Yu G."/>
            <person name="Fraser C.M."/>
            <person name="Venter J.C."/>
            <person name="Davis R.W."/>
        </authorList>
    </citation>
    <scope>NUCLEOTIDE SEQUENCE [LARGE SCALE GENOMIC DNA]</scope>
    <source>
        <strain>cv. Columbia</strain>
    </source>
</reference>
<reference key="3">
    <citation type="journal article" date="2017" name="Plant J.">
        <title>Araport11: a complete reannotation of the Arabidopsis thaliana reference genome.</title>
        <authorList>
            <person name="Cheng C.Y."/>
            <person name="Krishnakumar V."/>
            <person name="Chan A.P."/>
            <person name="Thibaud-Nissen F."/>
            <person name="Schobel S."/>
            <person name="Town C.D."/>
        </authorList>
    </citation>
    <scope>GENOME REANNOTATION</scope>
    <source>
        <strain>cv. Columbia</strain>
    </source>
</reference>
<reference key="4">
    <citation type="journal article" date="2003" name="Science">
        <title>Empirical analysis of transcriptional activity in the Arabidopsis genome.</title>
        <authorList>
            <person name="Yamada K."/>
            <person name="Lim J."/>
            <person name="Dale J.M."/>
            <person name="Chen H."/>
            <person name="Shinn P."/>
            <person name="Palm C.J."/>
            <person name="Southwick A.M."/>
            <person name="Wu H.C."/>
            <person name="Kim C.J."/>
            <person name="Nguyen M."/>
            <person name="Pham P.K."/>
            <person name="Cheuk R.F."/>
            <person name="Karlin-Newmann G."/>
            <person name="Liu S.X."/>
            <person name="Lam B."/>
            <person name="Sakano H."/>
            <person name="Wu T."/>
            <person name="Yu G."/>
            <person name="Miranda M."/>
            <person name="Quach H.L."/>
            <person name="Tripp M."/>
            <person name="Chang C.H."/>
            <person name="Lee J.M."/>
            <person name="Toriumi M.J."/>
            <person name="Chan M.M."/>
            <person name="Tang C.C."/>
            <person name="Onodera C.S."/>
            <person name="Deng J.M."/>
            <person name="Akiyama K."/>
            <person name="Ansari Y."/>
            <person name="Arakawa T."/>
            <person name="Banh J."/>
            <person name="Banno F."/>
            <person name="Bowser L."/>
            <person name="Brooks S.Y."/>
            <person name="Carninci P."/>
            <person name="Chao Q."/>
            <person name="Choy N."/>
            <person name="Enju A."/>
            <person name="Goldsmith A.D."/>
            <person name="Gurjal M."/>
            <person name="Hansen N.F."/>
            <person name="Hayashizaki Y."/>
            <person name="Johnson-Hopson C."/>
            <person name="Hsuan V.W."/>
            <person name="Iida K."/>
            <person name="Karnes M."/>
            <person name="Khan S."/>
            <person name="Koesema E."/>
            <person name="Ishida J."/>
            <person name="Jiang P.X."/>
            <person name="Jones T."/>
            <person name="Kawai J."/>
            <person name="Kamiya A."/>
            <person name="Meyers C."/>
            <person name="Nakajima M."/>
            <person name="Narusaka M."/>
            <person name="Seki M."/>
            <person name="Sakurai T."/>
            <person name="Satou M."/>
            <person name="Tamse R."/>
            <person name="Vaysberg M."/>
            <person name="Wallender E.K."/>
            <person name="Wong C."/>
            <person name="Yamamura Y."/>
            <person name="Yuan S."/>
            <person name="Shinozaki K."/>
            <person name="Davis R.W."/>
            <person name="Theologis A."/>
            <person name="Ecker J.R."/>
        </authorList>
    </citation>
    <scope>NUCLEOTIDE SEQUENCE [LARGE SCALE MRNA]</scope>
    <source>
        <strain>cv. Columbia</strain>
    </source>
</reference>
<reference key="5">
    <citation type="journal article" date="2002" name="Plant Physiol.">
        <title>Inositol phospholipid metabolism in Arabidopsis. Characterized and putative isoforms of inositol phospholipid kinase and phosphoinositide-specific phospholipase C.</title>
        <authorList>
            <person name="Mueller-Roeber B."/>
            <person name="Pical C."/>
        </authorList>
    </citation>
    <scope>GENE FAMILY</scope>
    <scope>NOMENCLATURE</scope>
</reference>
<reference key="6">
    <citation type="journal article" date="2009" name="Plant Physiol.">
        <title>Large-scale Arabidopsis phosphoproteome profiling reveals novel chloroplast kinase substrates and phosphorylation networks.</title>
        <authorList>
            <person name="Reiland S."/>
            <person name="Messerli G."/>
            <person name="Baerenfaller K."/>
            <person name="Gerrits B."/>
            <person name="Endler A."/>
            <person name="Grossmann J."/>
            <person name="Gruissem W."/>
            <person name="Baginsky S."/>
        </authorList>
    </citation>
    <scope>IDENTIFICATION BY MASS SPECTROMETRY [LARGE SCALE ANALYSIS]</scope>
</reference>
<comment type="catalytic activity">
    <reaction>
        <text>a 1,2-diacyl-sn-glycero-3-phospho-(1D-myo-inositol 4-phosphate) + ATP = a 1,2-diacyl-sn-glycero-3-phospho-(1D-myo-inositol-4,5-bisphosphate) + ADP + H(+)</text>
        <dbReference type="Rhea" id="RHEA:14425"/>
        <dbReference type="ChEBI" id="CHEBI:15378"/>
        <dbReference type="ChEBI" id="CHEBI:30616"/>
        <dbReference type="ChEBI" id="CHEBI:58178"/>
        <dbReference type="ChEBI" id="CHEBI:58456"/>
        <dbReference type="ChEBI" id="CHEBI:456216"/>
        <dbReference type="EC" id="2.7.1.68"/>
    </reaction>
</comment>
<comment type="sequence caution" evidence="3">
    <conflict type="erroneous gene model prediction">
        <sequence resource="EMBL-CDS" id="AAB65487"/>
    </conflict>
</comment>
<gene>
    <name type="primary">PIP5K7</name>
    <name type="synonym">P5K2</name>
    <name type="ordered locus">At1g10900</name>
    <name type="ORF">T19D16.18</name>
</gene>
<accession>Q9SUI2</accession>
<accession>O04095</accession>
<feature type="chain" id="PRO_0000185479" description="Phosphatidylinositol 4-phosphate 5-kinase 7">
    <location>
        <begin position="1"/>
        <end position="754"/>
    </location>
</feature>
<feature type="repeat" description="MORN 1">
    <location>
        <begin position="16"/>
        <end position="38"/>
    </location>
</feature>
<feature type="repeat" description="MORN 2">
    <location>
        <begin position="39"/>
        <end position="61"/>
    </location>
</feature>
<feature type="repeat" description="MORN 3">
    <location>
        <begin position="62"/>
        <end position="84"/>
    </location>
</feature>
<feature type="repeat" description="MORN 4">
    <location>
        <begin position="85"/>
        <end position="107"/>
    </location>
</feature>
<feature type="repeat" description="MORN 5">
    <location>
        <begin position="108"/>
        <end position="130"/>
    </location>
</feature>
<feature type="repeat" description="MORN 6">
    <location>
        <begin position="131"/>
        <end position="153"/>
    </location>
</feature>
<feature type="repeat" description="MORN 7">
    <location>
        <begin position="154"/>
        <end position="176"/>
    </location>
</feature>
<feature type="repeat" description="MORN 8">
    <location>
        <begin position="177"/>
        <end position="198"/>
    </location>
</feature>
<feature type="domain" description="PIPK" evidence="2">
    <location>
        <begin position="329"/>
        <end position="750"/>
    </location>
</feature>
<feature type="region of interest" description="Activation loop" evidence="1">
    <location>
        <begin position="710"/>
        <end position="731"/>
    </location>
</feature>
<name>PI5K7_ARATH</name>
<protein>
    <recommendedName>
        <fullName>Phosphatidylinositol 4-phosphate 5-kinase 7</fullName>
        <shortName>AtPIP5K7</shortName>
        <ecNumber>2.7.1.68</ecNumber>
    </recommendedName>
    <alternativeName>
        <fullName>1-phosphatidylinositol 4-phosphate kinase 7</fullName>
    </alternativeName>
    <alternativeName>
        <fullName>Diphosphoinositide kinase 7</fullName>
        <shortName>AtP5K2</shortName>
    </alternativeName>
    <alternativeName>
        <fullName>PtdIns(4)P-5-kinase 7</fullName>
    </alternativeName>
</protein>
<evidence type="ECO:0000250" key="1"/>
<evidence type="ECO:0000255" key="2">
    <source>
        <dbReference type="PROSITE-ProRule" id="PRU00781"/>
    </source>
</evidence>
<evidence type="ECO:0000305" key="3"/>
<proteinExistence type="evidence at protein level"/>
<organism>
    <name type="scientific">Arabidopsis thaliana</name>
    <name type="common">Mouse-ear cress</name>
    <dbReference type="NCBI Taxonomy" id="3702"/>
    <lineage>
        <taxon>Eukaryota</taxon>
        <taxon>Viridiplantae</taxon>
        <taxon>Streptophyta</taxon>
        <taxon>Embryophyta</taxon>
        <taxon>Tracheophyta</taxon>
        <taxon>Spermatophyta</taxon>
        <taxon>Magnoliopsida</taxon>
        <taxon>eudicotyledons</taxon>
        <taxon>Gunneridae</taxon>
        <taxon>Pentapetalae</taxon>
        <taxon>rosids</taxon>
        <taxon>malvids</taxon>
        <taxon>Brassicales</taxon>
        <taxon>Brassicaceae</taxon>
        <taxon>Camelineae</taxon>
        <taxon>Arabidopsis</taxon>
    </lineage>
</organism>
<dbReference type="EC" id="2.7.1.68"/>
<dbReference type="EMBL" id="AJ009782">
    <property type="protein sequence ID" value="CAB53377.1"/>
    <property type="molecule type" value="mRNA"/>
</dbReference>
<dbReference type="EMBL" id="U95973">
    <property type="protein sequence ID" value="AAB65487.1"/>
    <property type="status" value="ALT_SEQ"/>
    <property type="molecule type" value="Genomic_DNA"/>
</dbReference>
<dbReference type="EMBL" id="CP002684">
    <property type="protein sequence ID" value="AEE28661.1"/>
    <property type="molecule type" value="Genomic_DNA"/>
</dbReference>
<dbReference type="EMBL" id="CP002684">
    <property type="protein sequence ID" value="ANM60004.1"/>
    <property type="molecule type" value="Genomic_DNA"/>
</dbReference>
<dbReference type="EMBL" id="CP002684">
    <property type="protein sequence ID" value="ANM60005.1"/>
    <property type="molecule type" value="Genomic_DNA"/>
</dbReference>
<dbReference type="EMBL" id="AY062718">
    <property type="protein sequence ID" value="AAL32796.1"/>
    <property type="molecule type" value="mRNA"/>
</dbReference>
<dbReference type="EMBL" id="BT010342">
    <property type="protein sequence ID" value="AAQ56785.1"/>
    <property type="molecule type" value="mRNA"/>
</dbReference>
<dbReference type="PIR" id="G86242">
    <property type="entry name" value="G86242"/>
</dbReference>
<dbReference type="RefSeq" id="NP_001322318.1">
    <property type="nucleotide sequence ID" value="NM_001331939.1"/>
</dbReference>
<dbReference type="RefSeq" id="NP_001322319.1">
    <property type="nucleotide sequence ID" value="NM_001331940.1"/>
</dbReference>
<dbReference type="RefSeq" id="NP_172559.2">
    <property type="nucleotide sequence ID" value="NM_100965.5"/>
</dbReference>
<dbReference type="SMR" id="Q9SUI2"/>
<dbReference type="FunCoup" id="Q9SUI2">
    <property type="interactions" value="2645"/>
</dbReference>
<dbReference type="STRING" id="3702.Q9SUI2"/>
<dbReference type="iPTMnet" id="Q9SUI2"/>
<dbReference type="PaxDb" id="3702-AT1G10900.1"/>
<dbReference type="ProteomicsDB" id="235019"/>
<dbReference type="EnsemblPlants" id="AT1G10900.1">
    <property type="protein sequence ID" value="AT1G10900.1"/>
    <property type="gene ID" value="AT1G10900"/>
</dbReference>
<dbReference type="EnsemblPlants" id="AT1G10900.2">
    <property type="protein sequence ID" value="AT1G10900.2"/>
    <property type="gene ID" value="AT1G10900"/>
</dbReference>
<dbReference type="EnsemblPlants" id="AT1G10900.3">
    <property type="protein sequence ID" value="AT1G10900.3"/>
    <property type="gene ID" value="AT1G10900"/>
</dbReference>
<dbReference type="GeneID" id="837633"/>
<dbReference type="Gramene" id="AT1G10900.1">
    <property type="protein sequence ID" value="AT1G10900.1"/>
    <property type="gene ID" value="AT1G10900"/>
</dbReference>
<dbReference type="Gramene" id="AT1G10900.2">
    <property type="protein sequence ID" value="AT1G10900.2"/>
    <property type="gene ID" value="AT1G10900"/>
</dbReference>
<dbReference type="Gramene" id="AT1G10900.3">
    <property type="protein sequence ID" value="AT1G10900.3"/>
    <property type="gene ID" value="AT1G10900"/>
</dbReference>
<dbReference type="KEGG" id="ath:AT1G10900"/>
<dbReference type="Araport" id="AT1G10900"/>
<dbReference type="TAIR" id="AT1G10900"/>
<dbReference type="eggNOG" id="KOG0229">
    <property type="taxonomic scope" value="Eukaryota"/>
</dbReference>
<dbReference type="HOGENOM" id="CLU_004312_6_4_1"/>
<dbReference type="InParanoid" id="Q9SUI2"/>
<dbReference type="OMA" id="YYFGTWS"/>
<dbReference type="OrthoDB" id="70770at2759"/>
<dbReference type="PhylomeDB" id="Q9SUI2"/>
<dbReference type="BioCyc" id="ARA:AT1G10900-MONOMER"/>
<dbReference type="PRO" id="PR:Q9SUI2"/>
<dbReference type="Proteomes" id="UP000006548">
    <property type="component" value="Chromosome 1"/>
</dbReference>
<dbReference type="ExpressionAtlas" id="Q9SUI2">
    <property type="expression patterns" value="baseline and differential"/>
</dbReference>
<dbReference type="GO" id="GO:0016020">
    <property type="term" value="C:membrane"/>
    <property type="evidence" value="ECO:0007669"/>
    <property type="project" value="UniProtKB-ARBA"/>
</dbReference>
<dbReference type="GO" id="GO:0016308">
    <property type="term" value="F:1-phosphatidylinositol-4-phosphate 5-kinase activity"/>
    <property type="evidence" value="ECO:0007669"/>
    <property type="project" value="UniProtKB-EC"/>
</dbReference>
<dbReference type="GO" id="GO:0005524">
    <property type="term" value="F:ATP binding"/>
    <property type="evidence" value="ECO:0007669"/>
    <property type="project" value="UniProtKB-KW"/>
</dbReference>
<dbReference type="GO" id="GO:0046488">
    <property type="term" value="P:phosphatidylinositol metabolic process"/>
    <property type="evidence" value="ECO:0007669"/>
    <property type="project" value="InterPro"/>
</dbReference>
<dbReference type="CDD" id="cd17302">
    <property type="entry name" value="PIPKc_AtPIP5K_like"/>
    <property type="match status" value="1"/>
</dbReference>
<dbReference type="FunFam" id="2.20.110.10:FF:000027">
    <property type="entry name" value="Phosphatidylinositol 4-phosphate 5-kinase"/>
    <property type="match status" value="1"/>
</dbReference>
<dbReference type="FunFam" id="3.30.800.10:FF:000003">
    <property type="entry name" value="Phosphatidylinositol 4-phosphate 5-kinase"/>
    <property type="match status" value="1"/>
</dbReference>
<dbReference type="Gene3D" id="3.30.810.10">
    <property type="entry name" value="2-Layer Sandwich"/>
    <property type="match status" value="1"/>
</dbReference>
<dbReference type="Gene3D" id="2.20.110.10">
    <property type="entry name" value="Histone H3 K4-specific methyltransferase SET7/9 N-terminal domain"/>
    <property type="match status" value="3"/>
</dbReference>
<dbReference type="Gene3D" id="3.30.800.10">
    <property type="entry name" value="Phosphatidylinositol Phosphate Kinase II Beta"/>
    <property type="match status" value="1"/>
</dbReference>
<dbReference type="InterPro" id="IPR003409">
    <property type="entry name" value="MORN"/>
</dbReference>
<dbReference type="InterPro" id="IPR017163">
    <property type="entry name" value="PIno-4-P-5_kinase_pln"/>
</dbReference>
<dbReference type="InterPro" id="IPR027483">
    <property type="entry name" value="PInositol-4-P-4/5-kinase_C_sf"/>
</dbReference>
<dbReference type="InterPro" id="IPR002498">
    <property type="entry name" value="PInositol-4-P-4/5-kinase_core"/>
</dbReference>
<dbReference type="InterPro" id="IPR027484">
    <property type="entry name" value="PInositol-4-P-5-kinase_N"/>
</dbReference>
<dbReference type="InterPro" id="IPR023610">
    <property type="entry name" value="PInositol-4/5-P-5/4-kinase"/>
</dbReference>
<dbReference type="PANTHER" id="PTHR23086:SF104">
    <property type="entry name" value="PHOSPHATIDYLINOSITOL 4-PHOSPHATE 5-KINASE 7"/>
    <property type="match status" value="1"/>
</dbReference>
<dbReference type="PANTHER" id="PTHR23086">
    <property type="entry name" value="PHOSPHATIDYLINOSITOL-4-PHOSPHATE 5-KINASE"/>
    <property type="match status" value="1"/>
</dbReference>
<dbReference type="Pfam" id="PF02493">
    <property type="entry name" value="MORN"/>
    <property type="match status" value="8"/>
</dbReference>
<dbReference type="Pfam" id="PF01504">
    <property type="entry name" value="PIP5K"/>
    <property type="match status" value="1"/>
</dbReference>
<dbReference type="PIRSF" id="PIRSF037274">
    <property type="entry name" value="PIP5K_plant_prd"/>
    <property type="match status" value="1"/>
</dbReference>
<dbReference type="SMART" id="SM00698">
    <property type="entry name" value="MORN"/>
    <property type="match status" value="8"/>
</dbReference>
<dbReference type="SMART" id="SM00330">
    <property type="entry name" value="PIPKc"/>
    <property type="match status" value="1"/>
</dbReference>
<dbReference type="SUPFAM" id="SSF82185">
    <property type="entry name" value="Histone H3 K4-specific methyltransferase SET7/9 N-terminal domain"/>
    <property type="match status" value="2"/>
</dbReference>
<dbReference type="SUPFAM" id="SSF56104">
    <property type="entry name" value="SAICAR synthase-like"/>
    <property type="match status" value="1"/>
</dbReference>
<dbReference type="PROSITE" id="PS51455">
    <property type="entry name" value="PIPK"/>
    <property type="match status" value="1"/>
</dbReference>
<sequence>MDMRSGDREFPNGDFYSGEVKGIIPNGKGKYAWSDGTIYEGDWDEGKISGKGKLIWSSGAKYEGDFSGGYLHGFGTMTSPDESVYSGAWRMNVRHGLGRKEYCNSDLYDGLWKEGLQDGRGSYSWTNGNRYIGNWKKGKMCERGVMRWENGDLYDGFWLNGFRHGSGVYKFADGCLYYGTWSRGLKDGKGVFYPAGTKQPSLKKWCRSLEYDDTGKFVLSRSASVNVEELRSLNTVTQSLSVKTSAGETTCDPPRDFTCHGPVSKSARFSGSGQSEGQDKNRIVYEREYMQGVLIRETIMSSVDRSHKIKPPNRPREVRARSLMTFLRGEHNYYLMLNLQLGIRYTVGKITPVPRREVRASDFGKNARTKMFFPRDGSNFTPPHKSVDFSWKDYCPMVFRNLRQMFKLDAAEYMMSICGDDGLTEISSPGKSGSIFYLSHDDRFVIKTLKKSELQVLLRMLPKYYEHVGDHENTLITKFFGVHRITLKWGKKVRFVVMGNMFCTELKIHRRYDLKGSTQGRFTEKIKIQEKTTLKDLDLAYEFHMDKLLREALFKQIYLDCSFLESLNIIDYSLLLGLHFRAPGQLNDILEPPNAMSDQESVSSVDVGLTQEHSIPPKGLLLVTHEPNSVNTAPGPHIRGSTLRAFSVGEQEVDLILPGTARLRVQLGVNMPAQAHHKLIEDKEESATIELFEVYDVVVYMGIIDILQEYNTKKKVEHTCKSLQYDPMTISVTEPSTYSKRFVNFLHKVFPEER</sequence>